<gene>
    <name type="primary">SDG41</name>
    <name type="synonym">SET41</name>
    <name type="ordered locus">At1g43245</name>
    <name type="ORF">F1I21</name>
</gene>
<evidence type="ECO:0000255" key="1">
    <source>
        <dbReference type="PROSITE-ProRule" id="PRU00190"/>
    </source>
</evidence>
<reference key="1">
    <citation type="journal article" date="2000" name="Nature">
        <title>Sequence and analysis of chromosome 1 of the plant Arabidopsis thaliana.</title>
        <authorList>
            <person name="Theologis A."/>
            <person name="Ecker J.R."/>
            <person name="Palm C.J."/>
            <person name="Federspiel N.A."/>
            <person name="Kaul S."/>
            <person name="White O."/>
            <person name="Alonso J."/>
            <person name="Altafi H."/>
            <person name="Araujo R."/>
            <person name="Bowman C.L."/>
            <person name="Brooks S.Y."/>
            <person name="Buehler E."/>
            <person name="Chan A."/>
            <person name="Chao Q."/>
            <person name="Chen H."/>
            <person name="Cheuk R.F."/>
            <person name="Chin C.W."/>
            <person name="Chung M.K."/>
            <person name="Conn L."/>
            <person name="Conway A.B."/>
            <person name="Conway A.R."/>
            <person name="Creasy T.H."/>
            <person name="Dewar K."/>
            <person name="Dunn P."/>
            <person name="Etgu P."/>
            <person name="Feldblyum T.V."/>
            <person name="Feng J.-D."/>
            <person name="Fong B."/>
            <person name="Fujii C.Y."/>
            <person name="Gill J.E."/>
            <person name="Goldsmith A.D."/>
            <person name="Haas B."/>
            <person name="Hansen N.F."/>
            <person name="Hughes B."/>
            <person name="Huizar L."/>
            <person name="Hunter J.L."/>
            <person name="Jenkins J."/>
            <person name="Johnson-Hopson C."/>
            <person name="Khan S."/>
            <person name="Khaykin E."/>
            <person name="Kim C.J."/>
            <person name="Koo H.L."/>
            <person name="Kremenetskaia I."/>
            <person name="Kurtz D.B."/>
            <person name="Kwan A."/>
            <person name="Lam B."/>
            <person name="Langin-Hooper S."/>
            <person name="Lee A."/>
            <person name="Lee J.M."/>
            <person name="Lenz C.A."/>
            <person name="Li J.H."/>
            <person name="Li Y.-P."/>
            <person name="Lin X."/>
            <person name="Liu S.X."/>
            <person name="Liu Z.A."/>
            <person name="Luros J.S."/>
            <person name="Maiti R."/>
            <person name="Marziali A."/>
            <person name="Militscher J."/>
            <person name="Miranda M."/>
            <person name="Nguyen M."/>
            <person name="Nierman W.C."/>
            <person name="Osborne B.I."/>
            <person name="Pai G."/>
            <person name="Peterson J."/>
            <person name="Pham P.K."/>
            <person name="Rizzo M."/>
            <person name="Rooney T."/>
            <person name="Rowley D."/>
            <person name="Sakano H."/>
            <person name="Salzberg S.L."/>
            <person name="Schwartz J.R."/>
            <person name="Shinn P."/>
            <person name="Southwick A.M."/>
            <person name="Sun H."/>
            <person name="Tallon L.J."/>
            <person name="Tambunga G."/>
            <person name="Toriumi M.J."/>
            <person name="Town C.D."/>
            <person name="Utterback T."/>
            <person name="Van Aken S."/>
            <person name="Vaysberg M."/>
            <person name="Vysotskaia V.S."/>
            <person name="Walker M."/>
            <person name="Wu D."/>
            <person name="Yu G."/>
            <person name="Fraser C.M."/>
            <person name="Venter J.C."/>
            <person name="Davis R.W."/>
        </authorList>
    </citation>
    <scope>NUCLEOTIDE SEQUENCE [LARGE SCALE GENOMIC DNA]</scope>
    <source>
        <strain>cv. Columbia</strain>
    </source>
</reference>
<reference key="2">
    <citation type="journal article" date="2017" name="Plant J.">
        <title>Araport11: a complete reannotation of the Arabidopsis thaliana reference genome.</title>
        <authorList>
            <person name="Cheng C.Y."/>
            <person name="Krishnakumar V."/>
            <person name="Chan A.P."/>
            <person name="Thibaud-Nissen F."/>
            <person name="Schobel S."/>
            <person name="Town C.D."/>
        </authorList>
    </citation>
    <scope>GENOME REANNOTATION</scope>
    <source>
        <strain>cv. Columbia</strain>
    </source>
</reference>
<protein>
    <recommendedName>
        <fullName>Protein SET DOMAIN GROUP 41</fullName>
        <ecNumber>2.1.1.-</ecNumber>
    </recommendedName>
</protein>
<dbReference type="EC" id="2.1.1.-"/>
<dbReference type="EMBL" id="AC005687">
    <property type="status" value="NOT_ANNOTATED_CDS"/>
    <property type="molecule type" value="Genomic_DNA"/>
</dbReference>
<dbReference type="EMBL" id="CP002684">
    <property type="protein sequence ID" value="AEE31964.1"/>
    <property type="molecule type" value="Genomic_DNA"/>
</dbReference>
<dbReference type="RefSeq" id="NP_683372.2">
    <property type="nucleotide sequence ID" value="NM_148531.3"/>
</dbReference>
<dbReference type="FunCoup" id="Q3ECY6">
    <property type="interactions" value="250"/>
</dbReference>
<dbReference type="STRING" id="3702.Q3ECY6"/>
<dbReference type="PaxDb" id="3702-AT1G43245.1"/>
<dbReference type="ProteomicsDB" id="234494"/>
<dbReference type="EnsemblPlants" id="AT1G43245.1">
    <property type="protein sequence ID" value="AT1G43245.1"/>
    <property type="gene ID" value="AT1G43245"/>
</dbReference>
<dbReference type="GeneID" id="840925"/>
<dbReference type="Gramene" id="AT1G43245.1">
    <property type="protein sequence ID" value="AT1G43245.1"/>
    <property type="gene ID" value="AT1G43245"/>
</dbReference>
<dbReference type="KEGG" id="ath:AT1G43245"/>
<dbReference type="Araport" id="AT1G43245"/>
<dbReference type="TAIR" id="AT1G43245"/>
<dbReference type="eggNOG" id="ENOG502QTE7">
    <property type="taxonomic scope" value="Eukaryota"/>
</dbReference>
<dbReference type="HOGENOM" id="CLU_010021_0_0_1"/>
<dbReference type="InParanoid" id="Q3ECY6"/>
<dbReference type="OMA" id="KYRFICC"/>
<dbReference type="PhylomeDB" id="Q3ECY6"/>
<dbReference type="PRO" id="PR:Q3ECY6"/>
<dbReference type="Proteomes" id="UP000006548">
    <property type="component" value="Chromosome 1"/>
</dbReference>
<dbReference type="ExpressionAtlas" id="Q3ECY6">
    <property type="expression patterns" value="baseline and differential"/>
</dbReference>
<dbReference type="GO" id="GO:0008168">
    <property type="term" value="F:methyltransferase activity"/>
    <property type="evidence" value="ECO:0007669"/>
    <property type="project" value="UniProtKB-KW"/>
</dbReference>
<dbReference type="GO" id="GO:0032259">
    <property type="term" value="P:methylation"/>
    <property type="evidence" value="ECO:0007669"/>
    <property type="project" value="UniProtKB-KW"/>
</dbReference>
<dbReference type="CDD" id="cd20071">
    <property type="entry name" value="SET_SMYD"/>
    <property type="match status" value="1"/>
</dbReference>
<dbReference type="Gene3D" id="1.10.220.160">
    <property type="match status" value="1"/>
</dbReference>
<dbReference type="Gene3D" id="6.10.140.2220">
    <property type="match status" value="1"/>
</dbReference>
<dbReference type="Gene3D" id="2.170.270.10">
    <property type="entry name" value="SET domain"/>
    <property type="match status" value="1"/>
</dbReference>
<dbReference type="InterPro" id="IPR001214">
    <property type="entry name" value="SET_dom"/>
</dbReference>
<dbReference type="InterPro" id="IPR046341">
    <property type="entry name" value="SET_dom_sf"/>
</dbReference>
<dbReference type="PANTHER" id="PTHR47780">
    <property type="entry name" value="PROTEIN SET DOMAIN GROUP 41"/>
    <property type="match status" value="1"/>
</dbReference>
<dbReference type="PANTHER" id="PTHR47780:SF1">
    <property type="entry name" value="PROTEIN SET DOMAIN GROUP 41"/>
    <property type="match status" value="1"/>
</dbReference>
<dbReference type="Pfam" id="PF00856">
    <property type="entry name" value="SET"/>
    <property type="match status" value="1"/>
</dbReference>
<dbReference type="SUPFAM" id="SSF82199">
    <property type="entry name" value="SET domain"/>
    <property type="match status" value="1"/>
</dbReference>
<dbReference type="PROSITE" id="PS50280">
    <property type="entry name" value="SET"/>
    <property type="match status" value="1"/>
</dbReference>
<accession>Q3ECY6</accession>
<proteinExistence type="evidence at transcript level"/>
<feature type="chain" id="PRO_0000234286" description="Protein SET DOMAIN GROUP 41">
    <location>
        <begin position="1"/>
        <end position="558"/>
    </location>
</feature>
<feature type="domain" description="SET" evidence="1">
    <location>
        <begin position="115"/>
        <end position="249"/>
    </location>
</feature>
<keyword id="KW-0489">Methyltransferase</keyword>
<keyword id="KW-1185">Reference proteome</keyword>
<keyword id="KW-0949">S-adenosyl-L-methionine</keyword>
<keyword id="KW-0808">Transferase</keyword>
<organism>
    <name type="scientific">Arabidopsis thaliana</name>
    <name type="common">Mouse-ear cress</name>
    <dbReference type="NCBI Taxonomy" id="3702"/>
    <lineage>
        <taxon>Eukaryota</taxon>
        <taxon>Viridiplantae</taxon>
        <taxon>Streptophyta</taxon>
        <taxon>Embryophyta</taxon>
        <taxon>Tracheophyta</taxon>
        <taxon>Spermatophyta</taxon>
        <taxon>Magnoliopsida</taxon>
        <taxon>eudicotyledons</taxon>
        <taxon>Gunneridae</taxon>
        <taxon>Pentapetalae</taxon>
        <taxon>rosids</taxon>
        <taxon>malvids</taxon>
        <taxon>Brassicales</taxon>
        <taxon>Brassicaceae</taxon>
        <taxon>Camelineae</taxon>
        <taxon>Arabidopsis</taxon>
    </lineage>
</organism>
<sequence length="558" mass="61927">MEIRAAEDIEIRTDLFPPLSPLASSLYDSFLSSHCSSCFSLLPPSPPQPLYCSAACSLTDSFTNSPQFPPEITPILPSDIRTSLHLLNSTAVDTSSSPHRLNNLLTNHHLLMADPSISVAIHHAANFIATVIRSNRKNTELEEAAICAVLTNAVEVHDSNGLALGIALYNSSFSWINHSCSPNSCYRFVNNRTSYHDVHVTNTETSSNLELQEQVCGTSLNSGNGNGPKLIVRSIKRIKSGEEITVSYIDLLQPTGLRQSDLWSKYRFMCNCGRCAASPPAYVDSILEGVLTLESEKTTVGHFDGSTNKDEAVGKMNDYIQEAIDDFLSDNIDPKTCCEMIESVLHHGIQFKEDSQPHCLRLHACHYVALNAYITLATAYRIRSIDSETGIVCDMSRISAAYSLFLAGVSHHLFCAERSFAISAAKFWKNAGELLFDLAPKLLMELSVESDVKCTKCLMLETSNSHRDIKEKSRQILSCVRDISQVTWSFLTRGCPYLEKFRSPVDFSLTRTNGEREESSKDQTVNVLLLSSHCLLYADLLTDLCYGQKSHLVSRFRL</sequence>
<comment type="similarity">
    <text evidence="1">Belongs to the class V-like SAM-binding methyltransferase superfamily.</text>
</comment>
<name>SDG41_ARATH</name>